<name>NRDR_CORK4</name>
<dbReference type="EMBL" id="CP001620">
    <property type="protein sequence ID" value="ACR17838.1"/>
    <property type="molecule type" value="Genomic_DNA"/>
</dbReference>
<dbReference type="RefSeq" id="WP_012731725.1">
    <property type="nucleotide sequence ID" value="NC_012704.1"/>
</dbReference>
<dbReference type="SMR" id="C4LJ33"/>
<dbReference type="STRING" id="645127.ckrop_1087"/>
<dbReference type="GeneID" id="92725978"/>
<dbReference type="KEGG" id="ckp:ckrop_1087"/>
<dbReference type="eggNOG" id="COG1327">
    <property type="taxonomic scope" value="Bacteria"/>
</dbReference>
<dbReference type="HOGENOM" id="CLU_108412_1_0_11"/>
<dbReference type="OrthoDB" id="9807461at2"/>
<dbReference type="Proteomes" id="UP000001473">
    <property type="component" value="Chromosome"/>
</dbReference>
<dbReference type="GO" id="GO:0005524">
    <property type="term" value="F:ATP binding"/>
    <property type="evidence" value="ECO:0007669"/>
    <property type="project" value="UniProtKB-KW"/>
</dbReference>
<dbReference type="GO" id="GO:0003677">
    <property type="term" value="F:DNA binding"/>
    <property type="evidence" value="ECO:0007669"/>
    <property type="project" value="UniProtKB-KW"/>
</dbReference>
<dbReference type="GO" id="GO:0008270">
    <property type="term" value="F:zinc ion binding"/>
    <property type="evidence" value="ECO:0007669"/>
    <property type="project" value="UniProtKB-UniRule"/>
</dbReference>
<dbReference type="GO" id="GO:0045892">
    <property type="term" value="P:negative regulation of DNA-templated transcription"/>
    <property type="evidence" value="ECO:0007669"/>
    <property type="project" value="UniProtKB-UniRule"/>
</dbReference>
<dbReference type="HAMAP" id="MF_00440">
    <property type="entry name" value="NrdR"/>
    <property type="match status" value="1"/>
</dbReference>
<dbReference type="InterPro" id="IPR005144">
    <property type="entry name" value="ATP-cone_dom"/>
</dbReference>
<dbReference type="InterPro" id="IPR055173">
    <property type="entry name" value="NrdR-like_N"/>
</dbReference>
<dbReference type="InterPro" id="IPR003796">
    <property type="entry name" value="RNR_NrdR-like"/>
</dbReference>
<dbReference type="NCBIfam" id="TIGR00244">
    <property type="entry name" value="transcriptional regulator NrdR"/>
    <property type="match status" value="1"/>
</dbReference>
<dbReference type="PANTHER" id="PTHR30455">
    <property type="entry name" value="TRANSCRIPTIONAL REPRESSOR NRDR"/>
    <property type="match status" value="1"/>
</dbReference>
<dbReference type="PANTHER" id="PTHR30455:SF2">
    <property type="entry name" value="TRANSCRIPTIONAL REPRESSOR NRDR"/>
    <property type="match status" value="1"/>
</dbReference>
<dbReference type="Pfam" id="PF03477">
    <property type="entry name" value="ATP-cone"/>
    <property type="match status" value="1"/>
</dbReference>
<dbReference type="Pfam" id="PF22811">
    <property type="entry name" value="Zn_ribbon_NrdR"/>
    <property type="match status" value="1"/>
</dbReference>
<dbReference type="PROSITE" id="PS51161">
    <property type="entry name" value="ATP_CONE"/>
    <property type="match status" value="1"/>
</dbReference>
<sequence length="150" mass="17289">MFCPFCHHPQSRVIDSRTVENGFVTRRRRQCTKCHGRFTTVEKSVLLVEKRNGVTEDFSKDKLIRGVRRACQGRNVSDDALKLLAQEVEIDLRAQGGSRVNSNDVGLAVLEPLRKLDEVAYMRFASVYKSFSSMEDFEREITEFKARRSQ</sequence>
<gene>
    <name evidence="1" type="primary">nrdR</name>
    <name type="ordered locus">ckrop_1087</name>
</gene>
<comment type="function">
    <text evidence="1">Negatively regulates transcription of bacterial ribonucleotide reductase nrd genes and operons by binding to NrdR-boxes.</text>
</comment>
<comment type="cofactor">
    <cofactor evidence="1">
        <name>Zn(2+)</name>
        <dbReference type="ChEBI" id="CHEBI:29105"/>
    </cofactor>
    <text evidence="1">Binds 1 zinc ion.</text>
</comment>
<comment type="similarity">
    <text evidence="1">Belongs to the NrdR family.</text>
</comment>
<feature type="chain" id="PRO_1000206111" description="Transcriptional repressor NrdR">
    <location>
        <begin position="1"/>
        <end position="150"/>
    </location>
</feature>
<feature type="domain" description="ATP-cone" evidence="1">
    <location>
        <begin position="46"/>
        <end position="136"/>
    </location>
</feature>
<feature type="zinc finger region" evidence="1">
    <location>
        <begin position="3"/>
        <end position="34"/>
    </location>
</feature>
<reference key="1">
    <citation type="journal article" date="2008" name="J. Biotechnol.">
        <title>Ultrafast pyrosequencing of Corynebacterium kroppenstedtii DSM44385 revealed insights into the physiology of a lipophilic corynebacterium that lacks mycolic acids.</title>
        <authorList>
            <person name="Tauch A."/>
            <person name="Schneider J."/>
            <person name="Szczepanowski R."/>
            <person name="Tilker A."/>
            <person name="Viehoever P."/>
            <person name="Gartemann K.-H."/>
            <person name="Arnold W."/>
            <person name="Blom J."/>
            <person name="Brinkrolf K."/>
            <person name="Brune I."/>
            <person name="Goetker S."/>
            <person name="Weisshaar B."/>
            <person name="Goesmann A."/>
            <person name="Droege M."/>
            <person name="Puehler A."/>
        </authorList>
    </citation>
    <scope>NUCLEOTIDE SEQUENCE [LARGE SCALE GENOMIC DNA]</scope>
    <source>
        <strain>DSM 44385 / JCM 11950 / CIP 105744 / CCUG 35717</strain>
    </source>
</reference>
<organism>
    <name type="scientific">Corynebacterium kroppenstedtii (strain DSM 44385 / JCM 11950 / CIP 105744 / CCUG 35717)</name>
    <dbReference type="NCBI Taxonomy" id="645127"/>
    <lineage>
        <taxon>Bacteria</taxon>
        <taxon>Bacillati</taxon>
        <taxon>Actinomycetota</taxon>
        <taxon>Actinomycetes</taxon>
        <taxon>Mycobacteriales</taxon>
        <taxon>Corynebacteriaceae</taxon>
        <taxon>Corynebacterium</taxon>
    </lineage>
</organism>
<protein>
    <recommendedName>
        <fullName evidence="1">Transcriptional repressor NrdR</fullName>
    </recommendedName>
</protein>
<evidence type="ECO:0000255" key="1">
    <source>
        <dbReference type="HAMAP-Rule" id="MF_00440"/>
    </source>
</evidence>
<accession>C4LJ33</accession>
<proteinExistence type="inferred from homology"/>
<keyword id="KW-0067">ATP-binding</keyword>
<keyword id="KW-0238">DNA-binding</keyword>
<keyword id="KW-0479">Metal-binding</keyword>
<keyword id="KW-0547">Nucleotide-binding</keyword>
<keyword id="KW-1185">Reference proteome</keyword>
<keyword id="KW-0678">Repressor</keyword>
<keyword id="KW-0804">Transcription</keyword>
<keyword id="KW-0805">Transcription regulation</keyword>
<keyword id="KW-0862">Zinc</keyword>
<keyword id="KW-0863">Zinc-finger</keyword>